<reference key="1">
    <citation type="submission" date="2007-08" db="EMBL/GenBank/DDBJ databases">
        <title>Complete sequence of Shewanella sediminis HAW-EB3.</title>
        <authorList>
            <consortium name="US DOE Joint Genome Institute"/>
            <person name="Copeland A."/>
            <person name="Lucas S."/>
            <person name="Lapidus A."/>
            <person name="Barry K."/>
            <person name="Glavina del Rio T."/>
            <person name="Dalin E."/>
            <person name="Tice H."/>
            <person name="Pitluck S."/>
            <person name="Chertkov O."/>
            <person name="Brettin T."/>
            <person name="Bruce D."/>
            <person name="Detter J.C."/>
            <person name="Han C."/>
            <person name="Schmutz J."/>
            <person name="Larimer F."/>
            <person name="Land M."/>
            <person name="Hauser L."/>
            <person name="Kyrpides N."/>
            <person name="Kim E."/>
            <person name="Zhao J.-S."/>
            <person name="Richardson P."/>
        </authorList>
    </citation>
    <scope>NUCLEOTIDE SEQUENCE [LARGE SCALE GENOMIC DNA]</scope>
    <source>
        <strain>HAW-EB3</strain>
    </source>
</reference>
<evidence type="ECO:0000255" key="1">
    <source>
        <dbReference type="HAMAP-Rule" id="MF_00362"/>
    </source>
</evidence>
<evidence type="ECO:0000305" key="2"/>
<proteinExistence type="inferred from homology"/>
<accession>A8G1F7</accession>
<name>RL10_SHESH</name>
<keyword id="KW-1185">Reference proteome</keyword>
<keyword id="KW-0687">Ribonucleoprotein</keyword>
<keyword id="KW-0689">Ribosomal protein</keyword>
<keyword id="KW-0694">RNA-binding</keyword>
<keyword id="KW-0699">rRNA-binding</keyword>
<comment type="function">
    <text evidence="1">Forms part of the ribosomal stalk, playing a central role in the interaction of the ribosome with GTP-bound translation factors.</text>
</comment>
<comment type="subunit">
    <text evidence="1">Part of the ribosomal stalk of the 50S ribosomal subunit. The N-terminus interacts with L11 and the large rRNA to form the base of the stalk. The C-terminus forms an elongated spine to which L12 dimers bind in a sequential fashion forming a multimeric L10(L12)X complex.</text>
</comment>
<comment type="similarity">
    <text evidence="1">Belongs to the universal ribosomal protein uL10 family.</text>
</comment>
<sequence length="166" mass="17778">MALRLEDKQAIVAEVNEAAKGALSAVVADSRGVTVGEMTGLRKAAREAGVYIRVVRNTLVKRAVEGTDFECLNETFTGPTLIAFSNEHPGAAARLLKDFAADQEKFAIKAAAFEGELIPAADIDRLAKLPTYDEAIAQLMMTMKEASAGKLVRTLAALRDQKEEAA</sequence>
<organism>
    <name type="scientific">Shewanella sediminis (strain HAW-EB3)</name>
    <dbReference type="NCBI Taxonomy" id="425104"/>
    <lineage>
        <taxon>Bacteria</taxon>
        <taxon>Pseudomonadati</taxon>
        <taxon>Pseudomonadota</taxon>
        <taxon>Gammaproteobacteria</taxon>
        <taxon>Alteromonadales</taxon>
        <taxon>Shewanellaceae</taxon>
        <taxon>Shewanella</taxon>
    </lineage>
</organism>
<feature type="chain" id="PRO_1000079563" description="Large ribosomal subunit protein uL10">
    <location>
        <begin position="1"/>
        <end position="166"/>
    </location>
</feature>
<gene>
    <name evidence="1" type="primary">rplJ</name>
    <name type="ordered locus">Ssed_4326</name>
</gene>
<protein>
    <recommendedName>
        <fullName evidence="1">Large ribosomal subunit protein uL10</fullName>
    </recommendedName>
    <alternativeName>
        <fullName evidence="2">50S ribosomal protein L10</fullName>
    </alternativeName>
</protein>
<dbReference type="EMBL" id="CP000821">
    <property type="protein sequence ID" value="ABV38930.1"/>
    <property type="molecule type" value="Genomic_DNA"/>
</dbReference>
<dbReference type="RefSeq" id="WP_012144657.1">
    <property type="nucleotide sequence ID" value="NC_009831.1"/>
</dbReference>
<dbReference type="STRING" id="425104.Ssed_4326"/>
<dbReference type="KEGG" id="sse:Ssed_4326"/>
<dbReference type="eggNOG" id="COG0244">
    <property type="taxonomic scope" value="Bacteria"/>
</dbReference>
<dbReference type="HOGENOM" id="CLU_092227_0_2_6"/>
<dbReference type="OrthoDB" id="9808307at2"/>
<dbReference type="Proteomes" id="UP000002015">
    <property type="component" value="Chromosome"/>
</dbReference>
<dbReference type="GO" id="GO:0015934">
    <property type="term" value="C:large ribosomal subunit"/>
    <property type="evidence" value="ECO:0007669"/>
    <property type="project" value="InterPro"/>
</dbReference>
<dbReference type="GO" id="GO:0070180">
    <property type="term" value="F:large ribosomal subunit rRNA binding"/>
    <property type="evidence" value="ECO:0007669"/>
    <property type="project" value="UniProtKB-UniRule"/>
</dbReference>
<dbReference type="GO" id="GO:0003735">
    <property type="term" value="F:structural constituent of ribosome"/>
    <property type="evidence" value="ECO:0007669"/>
    <property type="project" value="InterPro"/>
</dbReference>
<dbReference type="GO" id="GO:0006412">
    <property type="term" value="P:translation"/>
    <property type="evidence" value="ECO:0007669"/>
    <property type="project" value="UniProtKB-UniRule"/>
</dbReference>
<dbReference type="CDD" id="cd05797">
    <property type="entry name" value="Ribosomal_L10"/>
    <property type="match status" value="1"/>
</dbReference>
<dbReference type="FunFam" id="3.30.70.1730:FF:000001">
    <property type="entry name" value="50S ribosomal protein L10"/>
    <property type="match status" value="1"/>
</dbReference>
<dbReference type="Gene3D" id="3.30.70.1730">
    <property type="match status" value="1"/>
</dbReference>
<dbReference type="Gene3D" id="6.10.250.2350">
    <property type="match status" value="1"/>
</dbReference>
<dbReference type="HAMAP" id="MF_00362">
    <property type="entry name" value="Ribosomal_uL10"/>
    <property type="match status" value="1"/>
</dbReference>
<dbReference type="InterPro" id="IPR001790">
    <property type="entry name" value="Ribosomal_uL10"/>
</dbReference>
<dbReference type="InterPro" id="IPR043141">
    <property type="entry name" value="Ribosomal_uL10-like_sf"/>
</dbReference>
<dbReference type="InterPro" id="IPR022973">
    <property type="entry name" value="Ribosomal_uL10_bac"/>
</dbReference>
<dbReference type="InterPro" id="IPR047865">
    <property type="entry name" value="Ribosomal_uL10_bac_type"/>
</dbReference>
<dbReference type="InterPro" id="IPR002363">
    <property type="entry name" value="Ribosomal_uL10_CS_bac"/>
</dbReference>
<dbReference type="NCBIfam" id="NF000955">
    <property type="entry name" value="PRK00099.1-1"/>
    <property type="match status" value="1"/>
</dbReference>
<dbReference type="PANTHER" id="PTHR11560">
    <property type="entry name" value="39S RIBOSOMAL PROTEIN L10, MITOCHONDRIAL"/>
    <property type="match status" value="1"/>
</dbReference>
<dbReference type="Pfam" id="PF00466">
    <property type="entry name" value="Ribosomal_L10"/>
    <property type="match status" value="1"/>
</dbReference>
<dbReference type="SUPFAM" id="SSF160369">
    <property type="entry name" value="Ribosomal protein L10-like"/>
    <property type="match status" value="1"/>
</dbReference>
<dbReference type="PROSITE" id="PS01109">
    <property type="entry name" value="RIBOSOMAL_L10"/>
    <property type="match status" value="1"/>
</dbReference>